<comment type="function">
    <text evidence="1">Binds directly to 23S ribosomal RNA and is necessary for the in vitro assembly process of the 50S ribosomal subunit. It is not involved in the protein synthesizing functions of that subunit.</text>
</comment>
<comment type="similarity">
    <text evidence="1">Belongs to the bacterial ribosomal protein bL20 family.</text>
</comment>
<reference key="1">
    <citation type="journal article" date="2008" name="BMC Genomics">
        <title>The genome of Aeromonas salmonicida subsp. salmonicida A449: insights into the evolution of a fish pathogen.</title>
        <authorList>
            <person name="Reith M.E."/>
            <person name="Singh R.K."/>
            <person name="Curtis B."/>
            <person name="Boyd J.M."/>
            <person name="Bouevitch A."/>
            <person name="Kimball J."/>
            <person name="Munholland J."/>
            <person name="Murphy C."/>
            <person name="Sarty D."/>
            <person name="Williams J."/>
            <person name="Nash J.H."/>
            <person name="Johnson S.C."/>
            <person name="Brown L.L."/>
        </authorList>
    </citation>
    <scope>NUCLEOTIDE SEQUENCE [LARGE SCALE GENOMIC DNA]</scope>
    <source>
        <strain>A449</strain>
    </source>
</reference>
<dbReference type="EMBL" id="CP000644">
    <property type="protein sequence ID" value="ABO90029.1"/>
    <property type="molecule type" value="Genomic_DNA"/>
</dbReference>
<dbReference type="RefSeq" id="WP_005300683.1">
    <property type="nucleotide sequence ID" value="NC_009348.1"/>
</dbReference>
<dbReference type="SMR" id="A4SMA7"/>
<dbReference type="STRING" id="29491.GCA_000820065_03906"/>
<dbReference type="GeneID" id="92723352"/>
<dbReference type="KEGG" id="asa:ASA_1956"/>
<dbReference type="eggNOG" id="COG0292">
    <property type="taxonomic scope" value="Bacteria"/>
</dbReference>
<dbReference type="HOGENOM" id="CLU_123265_0_1_6"/>
<dbReference type="Proteomes" id="UP000000225">
    <property type="component" value="Chromosome"/>
</dbReference>
<dbReference type="GO" id="GO:1990904">
    <property type="term" value="C:ribonucleoprotein complex"/>
    <property type="evidence" value="ECO:0007669"/>
    <property type="project" value="UniProtKB-KW"/>
</dbReference>
<dbReference type="GO" id="GO:0005840">
    <property type="term" value="C:ribosome"/>
    <property type="evidence" value="ECO:0007669"/>
    <property type="project" value="UniProtKB-KW"/>
</dbReference>
<dbReference type="GO" id="GO:0019843">
    <property type="term" value="F:rRNA binding"/>
    <property type="evidence" value="ECO:0007669"/>
    <property type="project" value="UniProtKB-UniRule"/>
</dbReference>
<dbReference type="GO" id="GO:0003735">
    <property type="term" value="F:structural constituent of ribosome"/>
    <property type="evidence" value="ECO:0007669"/>
    <property type="project" value="InterPro"/>
</dbReference>
<dbReference type="GO" id="GO:0000027">
    <property type="term" value="P:ribosomal large subunit assembly"/>
    <property type="evidence" value="ECO:0007669"/>
    <property type="project" value="UniProtKB-UniRule"/>
</dbReference>
<dbReference type="GO" id="GO:0006412">
    <property type="term" value="P:translation"/>
    <property type="evidence" value="ECO:0007669"/>
    <property type="project" value="InterPro"/>
</dbReference>
<dbReference type="CDD" id="cd07026">
    <property type="entry name" value="Ribosomal_L20"/>
    <property type="match status" value="1"/>
</dbReference>
<dbReference type="FunFam" id="1.10.1900.20:FF:000001">
    <property type="entry name" value="50S ribosomal protein L20"/>
    <property type="match status" value="1"/>
</dbReference>
<dbReference type="Gene3D" id="6.10.160.10">
    <property type="match status" value="1"/>
</dbReference>
<dbReference type="Gene3D" id="1.10.1900.20">
    <property type="entry name" value="Ribosomal protein L20"/>
    <property type="match status" value="1"/>
</dbReference>
<dbReference type="HAMAP" id="MF_00382">
    <property type="entry name" value="Ribosomal_bL20"/>
    <property type="match status" value="1"/>
</dbReference>
<dbReference type="InterPro" id="IPR005813">
    <property type="entry name" value="Ribosomal_bL20"/>
</dbReference>
<dbReference type="InterPro" id="IPR049946">
    <property type="entry name" value="RIBOSOMAL_L20_CS"/>
</dbReference>
<dbReference type="InterPro" id="IPR035566">
    <property type="entry name" value="Ribosomal_protein_bL20_C"/>
</dbReference>
<dbReference type="NCBIfam" id="TIGR01032">
    <property type="entry name" value="rplT_bact"/>
    <property type="match status" value="1"/>
</dbReference>
<dbReference type="PANTHER" id="PTHR10986">
    <property type="entry name" value="39S RIBOSOMAL PROTEIN L20"/>
    <property type="match status" value="1"/>
</dbReference>
<dbReference type="Pfam" id="PF00453">
    <property type="entry name" value="Ribosomal_L20"/>
    <property type="match status" value="1"/>
</dbReference>
<dbReference type="PRINTS" id="PR00062">
    <property type="entry name" value="RIBOSOMALL20"/>
</dbReference>
<dbReference type="SUPFAM" id="SSF74731">
    <property type="entry name" value="Ribosomal protein L20"/>
    <property type="match status" value="1"/>
</dbReference>
<dbReference type="PROSITE" id="PS00937">
    <property type="entry name" value="RIBOSOMAL_L20"/>
    <property type="match status" value="1"/>
</dbReference>
<feature type="chain" id="PRO_1000048921" description="Large ribosomal subunit protein bL20">
    <location>
        <begin position="1"/>
        <end position="118"/>
    </location>
</feature>
<organism>
    <name type="scientific">Aeromonas salmonicida (strain A449)</name>
    <dbReference type="NCBI Taxonomy" id="382245"/>
    <lineage>
        <taxon>Bacteria</taxon>
        <taxon>Pseudomonadati</taxon>
        <taxon>Pseudomonadota</taxon>
        <taxon>Gammaproteobacteria</taxon>
        <taxon>Aeromonadales</taxon>
        <taxon>Aeromonadaceae</taxon>
        <taxon>Aeromonas</taxon>
    </lineage>
</organism>
<protein>
    <recommendedName>
        <fullName evidence="1">Large ribosomal subunit protein bL20</fullName>
    </recommendedName>
    <alternativeName>
        <fullName evidence="2">50S ribosomal protein L20</fullName>
    </alternativeName>
</protein>
<evidence type="ECO:0000255" key="1">
    <source>
        <dbReference type="HAMAP-Rule" id="MF_00382"/>
    </source>
</evidence>
<evidence type="ECO:0000305" key="2"/>
<gene>
    <name evidence="1" type="primary">rplT</name>
    <name type="ordered locus">ASA_1956</name>
</gene>
<keyword id="KW-0687">Ribonucleoprotein</keyword>
<keyword id="KW-0689">Ribosomal protein</keyword>
<keyword id="KW-0694">RNA-binding</keyword>
<keyword id="KW-0699">rRNA-binding</keyword>
<accession>A4SMA7</accession>
<sequence>MPRVKRGVTARARHKKVMKAAKGYYGARSRVYRVAVQAVTKAGQYAYRDRRQKKRQFRQLWIARINAAARQNGLSYSRLINGLKKASIEIDRKILSDIAVHDKLAFTALVEKAKAALV</sequence>
<name>RL20_AERS4</name>
<proteinExistence type="inferred from homology"/>